<protein>
    <recommendedName>
        <fullName evidence="3">U15-barytoxin-Tl1b</fullName>
        <shortName evidence="3">U15-BATX-Tl1b</shortName>
    </recommendedName>
    <alternativeName>
        <fullName evidence="4">Toxin tri-ICK-23</fullName>
    </alternativeName>
</protein>
<proteinExistence type="evidence at transcript level"/>
<dbReference type="EMBL" id="GAQE01000026">
    <property type="protein sequence ID" value="JAB84528.1"/>
    <property type="molecule type" value="Transcribed_RNA"/>
</dbReference>
<dbReference type="ArachnoServer" id="AS002067">
    <property type="toxin name" value="U15-barytoxin-Tl1b"/>
</dbReference>
<dbReference type="GO" id="GO:0005576">
    <property type="term" value="C:extracellular region"/>
    <property type="evidence" value="ECO:0007669"/>
    <property type="project" value="UniProtKB-SubCell"/>
</dbReference>
<dbReference type="GO" id="GO:0099106">
    <property type="term" value="F:ion channel regulator activity"/>
    <property type="evidence" value="ECO:0007669"/>
    <property type="project" value="UniProtKB-KW"/>
</dbReference>
<dbReference type="GO" id="GO:0090729">
    <property type="term" value="F:toxin activity"/>
    <property type="evidence" value="ECO:0007669"/>
    <property type="project" value="UniProtKB-KW"/>
</dbReference>
<comment type="function">
    <text evidence="3">Ion channel inhibitor.</text>
</comment>
<comment type="subcellular location">
    <subcellularLocation>
        <location evidence="1">Secreted</location>
    </subcellularLocation>
</comment>
<comment type="tissue specificity">
    <text>Expressed by the venom gland.</text>
</comment>
<comment type="domain">
    <text evidence="3">The presence of a 'disulfide through disulfide knot' structurally defines this protein as a knottin.</text>
</comment>
<comment type="similarity">
    <text>Belongs to the neurotoxin 03 (Tx2) family. 03 subfamily.</text>
</comment>
<reference key="1">
    <citation type="journal article" date="2013" name="Toxins">
        <title>A proteomics and transcriptomics investigation of the venom from the barychelid spider Trittame loki (brush-foot trapdoor).</title>
        <authorList>
            <person name="Undheim E.A."/>
            <person name="Sunagar K."/>
            <person name="Herzig V."/>
            <person name="Kely L."/>
            <person name="Low D.H."/>
            <person name="Jackson T.N."/>
            <person name="Jones A."/>
            <person name="Kurniawan N."/>
            <person name="King G.F."/>
            <person name="Ali S.A."/>
            <person name="Antunes A."/>
            <person name="Ruder T."/>
            <person name="Fry B.G."/>
        </authorList>
    </citation>
    <scope>NUCLEOTIDE SEQUENCE [MRNA]</scope>
    <source>
        <tissue>Venom gland</tissue>
    </source>
</reference>
<evidence type="ECO:0000250" key="1"/>
<evidence type="ECO:0000255" key="2"/>
<evidence type="ECO:0000305" key="3"/>
<evidence type="ECO:0000312" key="4">
    <source>
        <dbReference type="EMBL" id="JAB84528.1"/>
    </source>
</evidence>
<keyword id="KW-1015">Disulfide bond</keyword>
<keyword id="KW-0872">Ion channel impairing toxin</keyword>
<keyword id="KW-0960">Knottin</keyword>
<keyword id="KW-0964">Secreted</keyword>
<keyword id="KW-0732">Signal</keyword>
<keyword id="KW-0800">Toxin</keyword>
<name>TX33B_TRILK</name>
<feature type="signal peptide" evidence="2">
    <location>
        <begin position="1"/>
        <end position="16"/>
    </location>
</feature>
<feature type="chain" id="PRO_0000429230" description="U15-barytoxin-Tl1b">
    <location>
        <begin position="17"/>
        <end position="121"/>
    </location>
</feature>
<feature type="disulfide bond" evidence="3">
    <location>
        <begin position="54"/>
        <end position="72"/>
    </location>
</feature>
<feature type="disulfide bond" evidence="3">
    <location>
        <begin position="65"/>
        <end position="78"/>
    </location>
</feature>
<feature type="disulfide bond" evidence="3">
    <location>
        <begin position="69"/>
        <end position="119"/>
    </location>
</feature>
<feature type="disulfide bond" evidence="3">
    <location>
        <begin position="71"/>
        <end position="90"/>
    </location>
</feature>
<organism>
    <name type="scientific">Trittame loki</name>
    <name type="common">Brush-footed trapdoor spider</name>
    <dbReference type="NCBI Taxonomy" id="1295018"/>
    <lineage>
        <taxon>Eukaryota</taxon>
        <taxon>Metazoa</taxon>
        <taxon>Ecdysozoa</taxon>
        <taxon>Arthropoda</taxon>
        <taxon>Chelicerata</taxon>
        <taxon>Arachnida</taxon>
        <taxon>Araneae</taxon>
        <taxon>Mygalomorphae</taxon>
        <taxon>Barychelidae</taxon>
        <taxon>Trittame</taxon>
    </lineage>
</organism>
<accession>W4VSI5</accession>
<sequence length="121" mass="12951">MKLFMVLVASFAFAVALPSKKREETAENELTGDLQEAAQPMIYAVAFPEIRASCVIGWKQQGAKCERDCECCGVAATCITRSTNSLPGFCGYRQTPNVLGQGLLYTADTISNGLSAIFCAA</sequence>